<name>EGFL7_MOUSE</name>
<sequence length="275" mass="29765">MWGSGELLVAWFLVLAADGTTEHVYRPSRRVCTVGISGGSISETFVQRVYQPYLTTCDGHRACSTYRTIYRTAYRRSPGVTPARPRYACCPGWKRTSGLPGACGAAICQPPCGNGGSCIRPGHCRCPVGWQGDTCQTDVDECSTGEASCPQRCVNTVGSYWCQGWEGQSPSADGTRCLSKEGPSPVAPNPTAGVDSMAREEVYRLQARVDVLEQKLQLVLAPLHSLASRSTEHGLQDPGSLLAHSFQQLDRIDSLSEQVSFLEEHLGSCSCKKDL</sequence>
<feature type="signal peptide" evidence="2">
    <location>
        <begin position="1"/>
        <end position="21"/>
    </location>
</feature>
<feature type="chain" id="PRO_0000007529" description="Epidermal growth factor-like protein 7">
    <location>
        <begin position="22"/>
        <end position="275"/>
    </location>
</feature>
<feature type="domain" description="EMI" evidence="4">
    <location>
        <begin position="28"/>
        <end position="105"/>
    </location>
</feature>
<feature type="domain" description="EGF-like 1" evidence="3">
    <location>
        <begin position="104"/>
        <end position="136"/>
    </location>
</feature>
<feature type="domain" description="EGF-like 2; calcium-binding" evidence="3">
    <location>
        <begin position="138"/>
        <end position="178"/>
    </location>
</feature>
<feature type="region of interest" description="Disordered" evidence="5">
    <location>
        <begin position="173"/>
        <end position="193"/>
    </location>
</feature>
<feature type="coiled-coil region" evidence="2">
    <location>
        <begin position="196"/>
        <end position="220"/>
    </location>
</feature>
<feature type="short sequence motif" description="Cell attachment site" evidence="1">
    <location>
        <begin position="131"/>
        <end position="133"/>
    </location>
</feature>
<feature type="disulfide bond" evidence="1">
    <location>
        <begin position="32"/>
        <end position="90"/>
    </location>
</feature>
<feature type="disulfide bond" evidence="1">
    <location>
        <begin position="57"/>
        <end position="63"/>
    </location>
</feature>
<feature type="disulfide bond" evidence="1">
    <location>
        <begin position="89"/>
        <end position="103"/>
    </location>
</feature>
<feature type="disulfide bond" evidence="1">
    <location>
        <begin position="108"/>
        <end position="118"/>
    </location>
</feature>
<feature type="disulfide bond" evidence="1">
    <location>
        <begin position="112"/>
        <end position="124"/>
    </location>
</feature>
<feature type="disulfide bond" evidence="1">
    <location>
        <begin position="126"/>
        <end position="135"/>
    </location>
</feature>
<feature type="disulfide bond" evidence="1">
    <location>
        <begin position="142"/>
        <end position="153"/>
    </location>
</feature>
<feature type="disulfide bond" evidence="1">
    <location>
        <begin position="149"/>
        <end position="162"/>
    </location>
</feature>
<feature type="splice variant" id="VSP_011765" description="In isoform 2." evidence="9">
    <location>
        <begin position="257"/>
        <end position="269"/>
    </location>
</feature>
<proteinExistence type="evidence at transcript level"/>
<evidence type="ECO:0000250" key="1"/>
<evidence type="ECO:0000255" key="2"/>
<evidence type="ECO:0000255" key="3">
    <source>
        <dbReference type="PROSITE-ProRule" id="PRU00076"/>
    </source>
</evidence>
<evidence type="ECO:0000255" key="4">
    <source>
        <dbReference type="PROSITE-ProRule" id="PRU00384"/>
    </source>
</evidence>
<evidence type="ECO:0000256" key="5">
    <source>
        <dbReference type="SAM" id="MobiDB-lite"/>
    </source>
</evidence>
<evidence type="ECO:0000269" key="6">
    <source>
    </source>
</evidence>
<evidence type="ECO:0000269" key="7">
    <source>
    </source>
</evidence>
<evidence type="ECO:0000269" key="8">
    <source>
    </source>
</evidence>
<evidence type="ECO:0000303" key="9">
    <source>
    </source>
</evidence>
<evidence type="ECO:0000305" key="10"/>
<dbReference type="EMBL" id="AY239289">
    <property type="protein sequence ID" value="AAP69825.1"/>
    <property type="molecule type" value="mRNA"/>
</dbReference>
<dbReference type="EMBL" id="AY239290">
    <property type="protein sequence ID" value="AAP69826.1"/>
    <property type="molecule type" value="mRNA"/>
</dbReference>
<dbReference type="EMBL" id="AY309459">
    <property type="protein sequence ID" value="AAP74732.1"/>
    <property type="status" value="ALT_INIT"/>
    <property type="molecule type" value="mRNA"/>
</dbReference>
<dbReference type="EMBL" id="AF184973">
    <property type="protein sequence ID" value="AAF01322.1"/>
    <property type="status" value="ALT_INIT"/>
    <property type="molecule type" value="mRNA"/>
</dbReference>
<dbReference type="EMBL" id="AK002601">
    <property type="protein sequence ID" value="BAB22222.1"/>
    <property type="status" value="ALT_INIT"/>
    <property type="molecule type" value="mRNA"/>
</dbReference>
<dbReference type="EMBL" id="BC024610">
    <property type="protein sequence ID" value="AAH24610.2"/>
    <property type="molecule type" value="mRNA"/>
</dbReference>
<dbReference type="CCDS" id="CCDS15807.3">
    <molecule id="Q9QXT5-1"/>
</dbReference>
<dbReference type="CCDS" id="CCDS15808.3">
    <molecule id="Q9QXT5-2"/>
</dbReference>
<dbReference type="RefSeq" id="NP_001158036.2">
    <molecule id="Q9QXT5-1"/>
    <property type="nucleotide sequence ID" value="NM_001164564.2"/>
</dbReference>
<dbReference type="RefSeq" id="NP_848538.3">
    <molecule id="Q9QXT5-1"/>
    <property type="nucleotide sequence ID" value="NM_178444.4"/>
</dbReference>
<dbReference type="RefSeq" id="NP_942017.3">
    <molecule id="Q9QXT5-1"/>
    <property type="nucleotide sequence ID" value="NM_198724.3"/>
</dbReference>
<dbReference type="RefSeq" id="NP_942018.3">
    <molecule id="Q9QXT5-2"/>
    <property type="nucleotide sequence ID" value="NM_198725.3"/>
</dbReference>
<dbReference type="BioGRID" id="237257">
    <property type="interactions" value="4"/>
</dbReference>
<dbReference type="FunCoup" id="Q9QXT5">
    <property type="interactions" value="138"/>
</dbReference>
<dbReference type="IntAct" id="Q9QXT5">
    <property type="interactions" value="5"/>
</dbReference>
<dbReference type="MINT" id="Q9QXT5"/>
<dbReference type="STRING" id="10090.ENSMUSP00000158990"/>
<dbReference type="GlyGen" id="Q9QXT5">
    <property type="glycosylation" value="2 sites"/>
</dbReference>
<dbReference type="iPTMnet" id="Q9QXT5"/>
<dbReference type="PhosphoSitePlus" id="Q9QXT5"/>
<dbReference type="PaxDb" id="10090-ENSMUSP00000128741"/>
<dbReference type="ProteomicsDB" id="277559">
    <molecule id="Q9QXT5-1"/>
</dbReference>
<dbReference type="ProteomicsDB" id="277560">
    <molecule id="Q9QXT5-2"/>
</dbReference>
<dbReference type="Antibodypedia" id="32209">
    <property type="antibodies" value="366 antibodies from 37 providers"/>
</dbReference>
<dbReference type="DNASU" id="353156"/>
<dbReference type="Ensembl" id="ENSMUST00000100290.13">
    <molecule id="Q9QXT5-2"/>
    <property type="protein sequence ID" value="ENSMUSP00000097863.7"/>
    <property type="gene ID" value="ENSMUSG00000026921.21"/>
</dbReference>
<dbReference type="Ensembl" id="ENSMUST00000102907.13">
    <molecule id="Q9QXT5-1"/>
    <property type="protein sequence ID" value="ENSMUSP00000099971.7"/>
    <property type="gene ID" value="ENSMUSG00000026921.21"/>
</dbReference>
<dbReference type="Ensembl" id="ENSMUST00000150404.10">
    <molecule id="Q9QXT5-1"/>
    <property type="protein sequence ID" value="ENSMUSP00000115482.4"/>
    <property type="gene ID" value="ENSMUSG00000026921.21"/>
</dbReference>
<dbReference type="Ensembl" id="ENSMUST00000166920.10">
    <molecule id="Q9QXT5-1"/>
    <property type="protein sequence ID" value="ENSMUSP00000128741.4"/>
    <property type="gene ID" value="ENSMUSG00000026921.21"/>
</dbReference>
<dbReference type="Ensembl" id="ENSMUST00000239075.2">
    <molecule id="Q9QXT5-1"/>
    <property type="protein sequence ID" value="ENSMUSP00000159032.2"/>
    <property type="gene ID" value="ENSMUSG00000026921.21"/>
</dbReference>
<dbReference type="GeneID" id="353156"/>
<dbReference type="KEGG" id="mmu:353156"/>
<dbReference type="UCSC" id="uc008ivq.2">
    <molecule id="Q9QXT5-2"/>
    <property type="organism name" value="mouse"/>
</dbReference>
<dbReference type="AGR" id="MGI:2449923"/>
<dbReference type="CTD" id="51162"/>
<dbReference type="MGI" id="MGI:2449923">
    <property type="gene designation" value="Egfl7"/>
</dbReference>
<dbReference type="VEuPathDB" id="HostDB:ENSMUSG00000026921"/>
<dbReference type="eggNOG" id="KOG1217">
    <property type="taxonomic scope" value="Eukaryota"/>
</dbReference>
<dbReference type="GeneTree" id="ENSGT00940000160015"/>
<dbReference type="InParanoid" id="Q9QXT5"/>
<dbReference type="OrthoDB" id="155976at2759"/>
<dbReference type="BioGRID-ORCS" id="353156">
    <property type="hits" value="2 hits in 76 CRISPR screens"/>
</dbReference>
<dbReference type="ChiTaRS" id="Egfl7">
    <property type="organism name" value="mouse"/>
</dbReference>
<dbReference type="PRO" id="PR:Q9QXT5"/>
<dbReference type="Proteomes" id="UP000000589">
    <property type="component" value="Chromosome 2"/>
</dbReference>
<dbReference type="RNAct" id="Q9QXT5">
    <property type="molecule type" value="protein"/>
</dbReference>
<dbReference type="Bgee" id="ENSMUSG00000026921">
    <property type="expression patterns" value="Expressed in lung and 87 other cell types or tissues"/>
</dbReference>
<dbReference type="ExpressionAtlas" id="Q9QXT5">
    <property type="expression patterns" value="baseline and differential"/>
</dbReference>
<dbReference type="GO" id="GO:0062023">
    <property type="term" value="C:collagen-containing extracellular matrix"/>
    <property type="evidence" value="ECO:0007005"/>
    <property type="project" value="BHF-UCL"/>
</dbReference>
<dbReference type="GO" id="GO:0005576">
    <property type="term" value="C:extracellular region"/>
    <property type="evidence" value="ECO:0000314"/>
    <property type="project" value="UniProtKB"/>
</dbReference>
<dbReference type="GO" id="GO:0005615">
    <property type="term" value="C:extracellular space"/>
    <property type="evidence" value="ECO:0000314"/>
    <property type="project" value="MGI"/>
</dbReference>
<dbReference type="GO" id="GO:0005509">
    <property type="term" value="F:calcium ion binding"/>
    <property type="evidence" value="ECO:0000303"/>
    <property type="project" value="UniProtKB"/>
</dbReference>
<dbReference type="GO" id="GO:0005112">
    <property type="term" value="F:Notch binding"/>
    <property type="evidence" value="ECO:0000353"/>
    <property type="project" value="MGI"/>
</dbReference>
<dbReference type="GO" id="GO:0001525">
    <property type="term" value="P:angiogenesis"/>
    <property type="evidence" value="ECO:0007669"/>
    <property type="project" value="UniProtKB-KW"/>
</dbReference>
<dbReference type="GO" id="GO:0001568">
    <property type="term" value="P:blood vessel development"/>
    <property type="evidence" value="ECO:0000270"/>
    <property type="project" value="UniProtKB"/>
</dbReference>
<dbReference type="GO" id="GO:0007155">
    <property type="term" value="P:cell adhesion"/>
    <property type="evidence" value="ECO:0007669"/>
    <property type="project" value="UniProtKB-KW"/>
</dbReference>
<dbReference type="GO" id="GO:0045746">
    <property type="term" value="P:negative regulation of Notch signaling pathway"/>
    <property type="evidence" value="ECO:0000266"/>
    <property type="project" value="MGI"/>
</dbReference>
<dbReference type="GO" id="GO:0014912">
    <property type="term" value="P:negative regulation of smooth muscle cell migration"/>
    <property type="evidence" value="ECO:0000314"/>
    <property type="project" value="MGI"/>
</dbReference>
<dbReference type="GO" id="GO:0001938">
    <property type="term" value="P:positive regulation of endothelial cell proliferation"/>
    <property type="evidence" value="ECO:0000266"/>
    <property type="project" value="MGI"/>
</dbReference>
<dbReference type="GO" id="GO:0030334">
    <property type="term" value="P:regulation of cell migration"/>
    <property type="evidence" value="ECO:0000304"/>
    <property type="project" value="UniProtKB"/>
</dbReference>
<dbReference type="GO" id="GO:0014909">
    <property type="term" value="P:smooth muscle cell migration"/>
    <property type="evidence" value="ECO:0000314"/>
    <property type="project" value="MGI"/>
</dbReference>
<dbReference type="GO" id="GO:0001570">
    <property type="term" value="P:vasculogenesis"/>
    <property type="evidence" value="ECO:0000270"/>
    <property type="project" value="UniProtKB"/>
</dbReference>
<dbReference type="CDD" id="cd00054">
    <property type="entry name" value="EGF_CA"/>
    <property type="match status" value="1"/>
</dbReference>
<dbReference type="FunFam" id="2.10.25.10:FF:000485">
    <property type="entry name" value="Epidermal growth factor-like protein 7"/>
    <property type="match status" value="1"/>
</dbReference>
<dbReference type="Gene3D" id="2.10.25.10">
    <property type="entry name" value="Laminin"/>
    <property type="match status" value="2"/>
</dbReference>
<dbReference type="InterPro" id="IPR050969">
    <property type="entry name" value="Dev_Signal_Modulators"/>
</dbReference>
<dbReference type="InterPro" id="IPR001881">
    <property type="entry name" value="EGF-like_Ca-bd_dom"/>
</dbReference>
<dbReference type="InterPro" id="IPR000742">
    <property type="entry name" value="EGF-like_dom"/>
</dbReference>
<dbReference type="InterPro" id="IPR018097">
    <property type="entry name" value="EGF_Ca-bd_CS"/>
</dbReference>
<dbReference type="InterPro" id="IPR011489">
    <property type="entry name" value="EMI_domain"/>
</dbReference>
<dbReference type="InterPro" id="IPR049883">
    <property type="entry name" value="NOTCH1_EGF-like"/>
</dbReference>
<dbReference type="PANTHER" id="PTHR14949">
    <property type="entry name" value="EGF-LIKE-DOMAIN, MULTIPLE 7, 8"/>
    <property type="match status" value="1"/>
</dbReference>
<dbReference type="PANTHER" id="PTHR14949:SF21">
    <property type="entry name" value="EPIDERMAL GROWTH FACTOR-LIKE PROTEIN 7"/>
    <property type="match status" value="1"/>
</dbReference>
<dbReference type="Pfam" id="PF07645">
    <property type="entry name" value="EGF_CA"/>
    <property type="match status" value="1"/>
</dbReference>
<dbReference type="Pfam" id="PF07546">
    <property type="entry name" value="EMI"/>
    <property type="match status" value="1"/>
</dbReference>
<dbReference type="SMART" id="SM00181">
    <property type="entry name" value="EGF"/>
    <property type="match status" value="2"/>
</dbReference>
<dbReference type="SMART" id="SM00179">
    <property type="entry name" value="EGF_CA"/>
    <property type="match status" value="1"/>
</dbReference>
<dbReference type="SUPFAM" id="SSF57196">
    <property type="entry name" value="EGF/Laminin"/>
    <property type="match status" value="2"/>
</dbReference>
<dbReference type="PROSITE" id="PS00022">
    <property type="entry name" value="EGF_1"/>
    <property type="match status" value="1"/>
</dbReference>
<dbReference type="PROSITE" id="PS01186">
    <property type="entry name" value="EGF_2"/>
    <property type="match status" value="1"/>
</dbReference>
<dbReference type="PROSITE" id="PS50026">
    <property type="entry name" value="EGF_3"/>
    <property type="match status" value="1"/>
</dbReference>
<dbReference type="PROSITE" id="PS01187">
    <property type="entry name" value="EGF_CA"/>
    <property type="match status" value="1"/>
</dbReference>
<dbReference type="PROSITE" id="PS51041">
    <property type="entry name" value="EMI"/>
    <property type="match status" value="1"/>
</dbReference>
<comment type="function">
    <text evidence="6 7">Regulates vascular tubulogenesis in vivo. Inhibits platelet-derived growth factor (PDGF)-BB-induced smooth muscle cell migration and promotes endothelial cell adhesion to the extracellular matrix and angiogenesis.</text>
</comment>
<comment type="subunit">
    <text evidence="1">Interacts with ITGAV/ITGB3 in an RGD-dependent manner, increasing endothelial cell's motility.</text>
</comment>
<comment type="subcellular location">
    <subcellularLocation>
        <location evidence="6 8">Secreted</location>
        <location evidence="6 8">Extracellular space</location>
    </subcellularLocation>
</comment>
<comment type="alternative products">
    <event type="alternative splicing"/>
    <isoform>
        <id>Q9QXT5-1</id>
        <name>1</name>
        <sequence type="displayed"/>
    </isoform>
    <isoform>
        <id>Q9QXT5-2</id>
        <name>2</name>
        <sequence type="described" ref="VSP_011765"/>
    </isoform>
</comment>
<comment type="tissue specificity">
    <text evidence="6 8">Expressed specifically by endothelial cells of the highly vascularized organs heart, lung and kidney.</text>
</comment>
<comment type="developmental stage">
    <text evidence="6 8">Expressed early during mouse embryogenesis in the yolk sac mesoderm and in the developing vascular system. At 7.5 dpc, it is expressed in the primitive blood islands where the first endothelial cells differentiate. At 10.5 and 13.5 dpc expression is restricted to endothelial cells.</text>
</comment>
<comment type="sequence caution" evidence="10">
    <conflict type="erroneous initiation">
        <sequence resource="EMBL-CDS" id="AAF01322"/>
    </conflict>
</comment>
<comment type="sequence caution" evidence="10">
    <conflict type="erroneous initiation">
        <sequence resource="EMBL-CDS" id="AAP74732"/>
    </conflict>
</comment>
<comment type="sequence caution" evidence="10">
    <conflict type="erroneous initiation">
        <sequence resource="EMBL-CDS" id="BAB22222"/>
    </conflict>
</comment>
<accession>Q9QXT5</accession>
<accession>Q6XD35</accession>
<accession>Q9DCP5</accession>
<protein>
    <recommendedName>
        <fullName>Epidermal growth factor-like protein 7</fullName>
        <shortName>EGF-like protein 7</shortName>
    </recommendedName>
    <alternativeName>
        <fullName>Multiple epidermal growth factor-like domains protein 7</fullName>
        <shortName>Multiple EGF-like domains protein 7</shortName>
    </alternativeName>
    <alternativeName>
        <fullName>NOTCH4-like protein</fullName>
    </alternativeName>
    <alternativeName>
        <fullName>Vascular endothelial statin</fullName>
        <shortName>VE-statin</shortName>
    </alternativeName>
    <alternativeName>
        <fullName>Zneu1</fullName>
    </alternativeName>
</protein>
<reference key="1">
    <citation type="journal article" date="2003" name="EMBO J.">
        <title>VE-statin, an endothelial repressor of smooth muscle cell migration.</title>
        <authorList>
            <person name="Soncin F."/>
            <person name="Mattot V."/>
            <person name="Lionneton F."/>
            <person name="Spruyt N."/>
            <person name="Lepretre F."/>
            <person name="Begue A."/>
            <person name="Stehelin D."/>
        </authorList>
    </citation>
    <scope>NUCLEOTIDE SEQUENCE [MRNA] (ISOFORM 1)</scope>
    <scope>FUNCTION</scope>
    <scope>SUBCELLULAR LOCATION</scope>
    <scope>TISSUE SPECIFICITY</scope>
    <scope>DEVELOPMENTAL STAGE</scope>
    <source>
        <strain>B6SJL</strain>
    </source>
</reference>
<reference key="2">
    <citation type="journal article" date="2004" name="Dev. Dyn.">
        <title>Egfl7, a novel epidermal growth factor-domain gene expressed in endothelial cells.</title>
        <authorList>
            <person name="Fitch M.J."/>
            <person name="Campagnolo L."/>
            <person name="Kuhnert F."/>
            <person name="Stuhlmann H."/>
        </authorList>
    </citation>
    <scope>NUCLEOTIDE SEQUENCE [MRNA] (ISOFORM 1)</scope>
    <scope>SUBCELLULAR LOCATION</scope>
    <scope>TISSUE SPECIFICITY</scope>
    <scope>DEVELOPMENTAL STAGE</scope>
    <source>
        <strain>CD-1</strain>
    </source>
</reference>
<reference key="3">
    <citation type="submission" date="1999-10" db="EMBL/GenBank/DDBJ databases">
        <authorList>
            <person name="Sheppard P."/>
            <person name="Jelinek L."/>
            <person name="Whitmore T."/>
            <person name="Blumberg H."/>
            <person name="Lehner J."/>
            <person name="O'Hara P."/>
        </authorList>
    </citation>
    <scope>NUCLEOTIDE SEQUENCE [MRNA] (ISOFORM 1)</scope>
</reference>
<reference key="4">
    <citation type="journal article" date="2005" name="Science">
        <title>The transcriptional landscape of the mammalian genome.</title>
        <authorList>
            <person name="Carninci P."/>
            <person name="Kasukawa T."/>
            <person name="Katayama S."/>
            <person name="Gough J."/>
            <person name="Frith M.C."/>
            <person name="Maeda N."/>
            <person name="Oyama R."/>
            <person name="Ravasi T."/>
            <person name="Lenhard B."/>
            <person name="Wells C."/>
            <person name="Kodzius R."/>
            <person name="Shimokawa K."/>
            <person name="Bajic V.B."/>
            <person name="Brenner S.E."/>
            <person name="Batalov S."/>
            <person name="Forrest A.R."/>
            <person name="Zavolan M."/>
            <person name="Davis M.J."/>
            <person name="Wilming L.G."/>
            <person name="Aidinis V."/>
            <person name="Allen J.E."/>
            <person name="Ambesi-Impiombato A."/>
            <person name="Apweiler R."/>
            <person name="Aturaliya R.N."/>
            <person name="Bailey T.L."/>
            <person name="Bansal M."/>
            <person name="Baxter L."/>
            <person name="Beisel K.W."/>
            <person name="Bersano T."/>
            <person name="Bono H."/>
            <person name="Chalk A.M."/>
            <person name="Chiu K.P."/>
            <person name="Choudhary V."/>
            <person name="Christoffels A."/>
            <person name="Clutterbuck D.R."/>
            <person name="Crowe M.L."/>
            <person name="Dalla E."/>
            <person name="Dalrymple B.P."/>
            <person name="de Bono B."/>
            <person name="Della Gatta G."/>
            <person name="di Bernardo D."/>
            <person name="Down T."/>
            <person name="Engstrom P."/>
            <person name="Fagiolini M."/>
            <person name="Faulkner G."/>
            <person name="Fletcher C.F."/>
            <person name="Fukushima T."/>
            <person name="Furuno M."/>
            <person name="Futaki S."/>
            <person name="Gariboldi M."/>
            <person name="Georgii-Hemming P."/>
            <person name="Gingeras T.R."/>
            <person name="Gojobori T."/>
            <person name="Green R.E."/>
            <person name="Gustincich S."/>
            <person name="Harbers M."/>
            <person name="Hayashi Y."/>
            <person name="Hensch T.K."/>
            <person name="Hirokawa N."/>
            <person name="Hill D."/>
            <person name="Huminiecki L."/>
            <person name="Iacono M."/>
            <person name="Ikeo K."/>
            <person name="Iwama A."/>
            <person name="Ishikawa T."/>
            <person name="Jakt M."/>
            <person name="Kanapin A."/>
            <person name="Katoh M."/>
            <person name="Kawasawa Y."/>
            <person name="Kelso J."/>
            <person name="Kitamura H."/>
            <person name="Kitano H."/>
            <person name="Kollias G."/>
            <person name="Krishnan S.P."/>
            <person name="Kruger A."/>
            <person name="Kummerfeld S.K."/>
            <person name="Kurochkin I.V."/>
            <person name="Lareau L.F."/>
            <person name="Lazarevic D."/>
            <person name="Lipovich L."/>
            <person name="Liu J."/>
            <person name="Liuni S."/>
            <person name="McWilliam S."/>
            <person name="Madan Babu M."/>
            <person name="Madera M."/>
            <person name="Marchionni L."/>
            <person name="Matsuda H."/>
            <person name="Matsuzawa S."/>
            <person name="Miki H."/>
            <person name="Mignone F."/>
            <person name="Miyake S."/>
            <person name="Morris K."/>
            <person name="Mottagui-Tabar S."/>
            <person name="Mulder N."/>
            <person name="Nakano N."/>
            <person name="Nakauchi H."/>
            <person name="Ng P."/>
            <person name="Nilsson R."/>
            <person name="Nishiguchi S."/>
            <person name="Nishikawa S."/>
            <person name="Nori F."/>
            <person name="Ohara O."/>
            <person name="Okazaki Y."/>
            <person name="Orlando V."/>
            <person name="Pang K.C."/>
            <person name="Pavan W.J."/>
            <person name="Pavesi G."/>
            <person name="Pesole G."/>
            <person name="Petrovsky N."/>
            <person name="Piazza S."/>
            <person name="Reed J."/>
            <person name="Reid J.F."/>
            <person name="Ring B.Z."/>
            <person name="Ringwald M."/>
            <person name="Rost B."/>
            <person name="Ruan Y."/>
            <person name="Salzberg S.L."/>
            <person name="Sandelin A."/>
            <person name="Schneider C."/>
            <person name="Schoenbach C."/>
            <person name="Sekiguchi K."/>
            <person name="Semple C.A."/>
            <person name="Seno S."/>
            <person name="Sessa L."/>
            <person name="Sheng Y."/>
            <person name="Shibata Y."/>
            <person name="Shimada H."/>
            <person name="Shimada K."/>
            <person name="Silva D."/>
            <person name="Sinclair B."/>
            <person name="Sperling S."/>
            <person name="Stupka E."/>
            <person name="Sugiura K."/>
            <person name="Sultana R."/>
            <person name="Takenaka Y."/>
            <person name="Taki K."/>
            <person name="Tammoja K."/>
            <person name="Tan S.L."/>
            <person name="Tang S."/>
            <person name="Taylor M.S."/>
            <person name="Tegner J."/>
            <person name="Teichmann S.A."/>
            <person name="Ueda H.R."/>
            <person name="van Nimwegen E."/>
            <person name="Verardo R."/>
            <person name="Wei C.L."/>
            <person name="Yagi K."/>
            <person name="Yamanishi H."/>
            <person name="Zabarovsky E."/>
            <person name="Zhu S."/>
            <person name="Zimmer A."/>
            <person name="Hide W."/>
            <person name="Bult C."/>
            <person name="Grimmond S.M."/>
            <person name="Teasdale R.D."/>
            <person name="Liu E.T."/>
            <person name="Brusic V."/>
            <person name="Quackenbush J."/>
            <person name="Wahlestedt C."/>
            <person name="Mattick J.S."/>
            <person name="Hume D.A."/>
            <person name="Kai C."/>
            <person name="Sasaki D."/>
            <person name="Tomaru Y."/>
            <person name="Fukuda S."/>
            <person name="Kanamori-Katayama M."/>
            <person name="Suzuki M."/>
            <person name="Aoki J."/>
            <person name="Arakawa T."/>
            <person name="Iida J."/>
            <person name="Imamura K."/>
            <person name="Itoh M."/>
            <person name="Kato T."/>
            <person name="Kawaji H."/>
            <person name="Kawagashira N."/>
            <person name="Kawashima T."/>
            <person name="Kojima M."/>
            <person name="Kondo S."/>
            <person name="Konno H."/>
            <person name="Nakano K."/>
            <person name="Ninomiya N."/>
            <person name="Nishio T."/>
            <person name="Okada M."/>
            <person name="Plessy C."/>
            <person name="Shibata K."/>
            <person name="Shiraki T."/>
            <person name="Suzuki S."/>
            <person name="Tagami M."/>
            <person name="Waki K."/>
            <person name="Watahiki A."/>
            <person name="Okamura-Oho Y."/>
            <person name="Suzuki H."/>
            <person name="Kawai J."/>
            <person name="Hayashizaki Y."/>
        </authorList>
    </citation>
    <scope>NUCLEOTIDE SEQUENCE [LARGE SCALE MRNA] (ISOFORM 2)</scope>
    <source>
        <strain>C57BL/6J</strain>
        <tissue>Kidney</tissue>
    </source>
</reference>
<reference key="5">
    <citation type="journal article" date="2004" name="Genome Res.">
        <title>The status, quality, and expansion of the NIH full-length cDNA project: the Mammalian Gene Collection (MGC).</title>
        <authorList>
            <consortium name="The MGC Project Team"/>
        </authorList>
    </citation>
    <scope>NUCLEOTIDE SEQUENCE [LARGE SCALE MRNA] (ISOFORM 1)</scope>
    <source>
        <strain>FVB/N</strain>
        <tissue>Liver</tissue>
    </source>
</reference>
<reference key="6">
    <citation type="journal article" date="2004" name="Nature">
        <title>The endothelial-cell-derived secreted factor Egfl7 regulates vascular tube formation.</title>
        <authorList>
            <person name="Parker L.H."/>
            <person name="Schmidt M."/>
            <person name="Jin S.-W."/>
            <person name="Gray A.M."/>
            <person name="Beis D."/>
            <person name="Pham T."/>
            <person name="Frantz G."/>
            <person name="Palmieri S."/>
            <person name="Hillan K."/>
            <person name="Stainier D.Y.R."/>
            <person name="De Sauvage F.J."/>
            <person name="Ye W."/>
        </authorList>
    </citation>
    <scope>FUNCTION</scope>
</reference>
<keyword id="KW-0025">Alternative splicing</keyword>
<keyword id="KW-0037">Angiogenesis</keyword>
<keyword id="KW-0106">Calcium</keyword>
<keyword id="KW-0130">Cell adhesion</keyword>
<keyword id="KW-0175">Coiled coil</keyword>
<keyword id="KW-0217">Developmental protein</keyword>
<keyword id="KW-0221">Differentiation</keyword>
<keyword id="KW-1015">Disulfide bond</keyword>
<keyword id="KW-0245">EGF-like domain</keyword>
<keyword id="KW-1185">Reference proteome</keyword>
<keyword id="KW-0677">Repeat</keyword>
<keyword id="KW-0964">Secreted</keyword>
<keyword id="KW-0732">Signal</keyword>
<gene>
    <name type="primary">Egfl7</name>
    <name type="synonym">Megf7</name>
</gene>
<organism>
    <name type="scientific">Mus musculus</name>
    <name type="common">Mouse</name>
    <dbReference type="NCBI Taxonomy" id="10090"/>
    <lineage>
        <taxon>Eukaryota</taxon>
        <taxon>Metazoa</taxon>
        <taxon>Chordata</taxon>
        <taxon>Craniata</taxon>
        <taxon>Vertebrata</taxon>
        <taxon>Euteleostomi</taxon>
        <taxon>Mammalia</taxon>
        <taxon>Eutheria</taxon>
        <taxon>Euarchontoglires</taxon>
        <taxon>Glires</taxon>
        <taxon>Rodentia</taxon>
        <taxon>Myomorpha</taxon>
        <taxon>Muroidea</taxon>
        <taxon>Muridae</taxon>
        <taxon>Murinae</taxon>
        <taxon>Mus</taxon>
        <taxon>Mus</taxon>
    </lineage>
</organism>